<reference key="1">
    <citation type="journal article" date="2006" name="Proc. Natl. Acad. Sci. U.S.A.">
        <title>Comparative genomics of the lactic acid bacteria.</title>
        <authorList>
            <person name="Makarova K.S."/>
            <person name="Slesarev A."/>
            <person name="Wolf Y.I."/>
            <person name="Sorokin A."/>
            <person name="Mirkin B."/>
            <person name="Koonin E.V."/>
            <person name="Pavlov A."/>
            <person name="Pavlova N."/>
            <person name="Karamychev V."/>
            <person name="Polouchine N."/>
            <person name="Shakhova V."/>
            <person name="Grigoriev I."/>
            <person name="Lou Y."/>
            <person name="Rohksar D."/>
            <person name="Lucas S."/>
            <person name="Huang K."/>
            <person name="Goodstein D.M."/>
            <person name="Hawkins T."/>
            <person name="Plengvidhya V."/>
            <person name="Welker D."/>
            <person name="Hughes J."/>
            <person name="Goh Y."/>
            <person name="Benson A."/>
            <person name="Baldwin K."/>
            <person name="Lee J.-H."/>
            <person name="Diaz-Muniz I."/>
            <person name="Dosti B."/>
            <person name="Smeianov V."/>
            <person name="Wechter W."/>
            <person name="Barabote R."/>
            <person name="Lorca G."/>
            <person name="Altermann E."/>
            <person name="Barrangou R."/>
            <person name="Ganesan B."/>
            <person name="Xie Y."/>
            <person name="Rawsthorne H."/>
            <person name="Tamir D."/>
            <person name="Parker C."/>
            <person name="Breidt F."/>
            <person name="Broadbent J.R."/>
            <person name="Hutkins R."/>
            <person name="O'Sullivan D."/>
            <person name="Steele J."/>
            <person name="Unlu G."/>
            <person name="Saier M.H. Jr."/>
            <person name="Klaenhammer T."/>
            <person name="Richardson P."/>
            <person name="Kozyavkin S."/>
            <person name="Weimer B.C."/>
            <person name="Mills D.A."/>
        </authorList>
    </citation>
    <scope>NUCLEOTIDE SEQUENCE [LARGE SCALE GENOMIC DNA]</scope>
    <source>
        <strain>ATCC 367 / BCRC 12310 / CIP 105137 / JCM 1170 / LMG 11437 / NCIMB 947 / NCTC 947</strain>
    </source>
</reference>
<sequence>MEVNHVELVMSAVDPAQYPTTGYPEIALVGRSNVGKSSLTNVLINRNSYARTSSQPGKTQTLNFYNVEDQLYFVDVPGYGYAKVSKTEREKWGQMIETYLTQRDQLRGVISLVDARHAPTEDDIQMYRWLAYYELPTLIVATKSDKIARGKWNQAVSQIKKSLELPNTDNIVMFSAPKKMGKDAVWNWIEAQAFGGE</sequence>
<gene>
    <name evidence="1" type="primary">engB</name>
    <name type="ordered locus">LVIS_1386</name>
</gene>
<proteinExistence type="inferred from homology"/>
<keyword id="KW-0131">Cell cycle</keyword>
<keyword id="KW-0132">Cell division</keyword>
<keyword id="KW-0342">GTP-binding</keyword>
<keyword id="KW-0460">Magnesium</keyword>
<keyword id="KW-0479">Metal-binding</keyword>
<keyword id="KW-0547">Nucleotide-binding</keyword>
<keyword id="KW-1185">Reference proteome</keyword>
<keyword id="KW-0717">Septation</keyword>
<dbReference type="EMBL" id="CP000416">
    <property type="protein sequence ID" value="ABJ64484.1"/>
    <property type="molecule type" value="Genomic_DNA"/>
</dbReference>
<dbReference type="SMR" id="Q03QN8"/>
<dbReference type="STRING" id="387344.LVIS_1386"/>
<dbReference type="KEGG" id="lbr:LVIS_1386"/>
<dbReference type="eggNOG" id="COG0218">
    <property type="taxonomic scope" value="Bacteria"/>
</dbReference>
<dbReference type="HOGENOM" id="CLU_033732_3_0_9"/>
<dbReference type="Proteomes" id="UP000001652">
    <property type="component" value="Chromosome"/>
</dbReference>
<dbReference type="GO" id="GO:0005829">
    <property type="term" value="C:cytosol"/>
    <property type="evidence" value="ECO:0007669"/>
    <property type="project" value="TreeGrafter"/>
</dbReference>
<dbReference type="GO" id="GO:0005525">
    <property type="term" value="F:GTP binding"/>
    <property type="evidence" value="ECO:0007669"/>
    <property type="project" value="UniProtKB-UniRule"/>
</dbReference>
<dbReference type="GO" id="GO:0046872">
    <property type="term" value="F:metal ion binding"/>
    <property type="evidence" value="ECO:0007669"/>
    <property type="project" value="UniProtKB-KW"/>
</dbReference>
<dbReference type="GO" id="GO:0000917">
    <property type="term" value="P:division septum assembly"/>
    <property type="evidence" value="ECO:0007669"/>
    <property type="project" value="UniProtKB-KW"/>
</dbReference>
<dbReference type="CDD" id="cd01876">
    <property type="entry name" value="YihA_EngB"/>
    <property type="match status" value="1"/>
</dbReference>
<dbReference type="FunFam" id="3.40.50.300:FF:000098">
    <property type="entry name" value="Probable GTP-binding protein EngB"/>
    <property type="match status" value="1"/>
</dbReference>
<dbReference type="Gene3D" id="3.40.50.300">
    <property type="entry name" value="P-loop containing nucleotide triphosphate hydrolases"/>
    <property type="match status" value="1"/>
</dbReference>
<dbReference type="HAMAP" id="MF_00321">
    <property type="entry name" value="GTPase_EngB"/>
    <property type="match status" value="1"/>
</dbReference>
<dbReference type="InterPro" id="IPR030393">
    <property type="entry name" value="G_ENGB_dom"/>
</dbReference>
<dbReference type="InterPro" id="IPR006073">
    <property type="entry name" value="GTP-bd"/>
</dbReference>
<dbReference type="InterPro" id="IPR019987">
    <property type="entry name" value="GTP-bd_ribosome_bio_YsxC"/>
</dbReference>
<dbReference type="InterPro" id="IPR027417">
    <property type="entry name" value="P-loop_NTPase"/>
</dbReference>
<dbReference type="InterPro" id="IPR005225">
    <property type="entry name" value="Small_GTP-bd"/>
</dbReference>
<dbReference type="NCBIfam" id="TIGR03598">
    <property type="entry name" value="GTPase_YsxC"/>
    <property type="match status" value="1"/>
</dbReference>
<dbReference type="NCBIfam" id="TIGR00231">
    <property type="entry name" value="small_GTP"/>
    <property type="match status" value="1"/>
</dbReference>
<dbReference type="PANTHER" id="PTHR11649:SF13">
    <property type="entry name" value="ENGB-TYPE G DOMAIN-CONTAINING PROTEIN"/>
    <property type="match status" value="1"/>
</dbReference>
<dbReference type="PANTHER" id="PTHR11649">
    <property type="entry name" value="MSS1/TRME-RELATED GTP-BINDING PROTEIN"/>
    <property type="match status" value="1"/>
</dbReference>
<dbReference type="Pfam" id="PF01926">
    <property type="entry name" value="MMR_HSR1"/>
    <property type="match status" value="1"/>
</dbReference>
<dbReference type="SUPFAM" id="SSF52540">
    <property type="entry name" value="P-loop containing nucleoside triphosphate hydrolases"/>
    <property type="match status" value="1"/>
</dbReference>
<dbReference type="PROSITE" id="PS51706">
    <property type="entry name" value="G_ENGB"/>
    <property type="match status" value="1"/>
</dbReference>
<organism>
    <name type="scientific">Levilactobacillus brevis (strain ATCC 367 / BCRC 12310 / CIP 105137 / JCM 1170 / LMG 11437 / NCIMB 947 / NCTC 947)</name>
    <name type="common">Lactobacillus brevis</name>
    <dbReference type="NCBI Taxonomy" id="387344"/>
    <lineage>
        <taxon>Bacteria</taxon>
        <taxon>Bacillati</taxon>
        <taxon>Bacillota</taxon>
        <taxon>Bacilli</taxon>
        <taxon>Lactobacillales</taxon>
        <taxon>Lactobacillaceae</taxon>
        <taxon>Levilactobacillus</taxon>
    </lineage>
</organism>
<evidence type="ECO:0000255" key="1">
    <source>
        <dbReference type="HAMAP-Rule" id="MF_00321"/>
    </source>
</evidence>
<protein>
    <recommendedName>
        <fullName evidence="1">Probable GTP-binding protein EngB</fullName>
    </recommendedName>
</protein>
<name>ENGB_LEVBA</name>
<comment type="function">
    <text evidence="1">Necessary for normal cell division and for the maintenance of normal septation.</text>
</comment>
<comment type="cofactor">
    <cofactor evidence="1">
        <name>Mg(2+)</name>
        <dbReference type="ChEBI" id="CHEBI:18420"/>
    </cofactor>
</comment>
<comment type="similarity">
    <text evidence="1">Belongs to the TRAFAC class TrmE-Era-EngA-EngB-Septin-like GTPase superfamily. EngB GTPase family.</text>
</comment>
<accession>Q03QN8</accession>
<feature type="chain" id="PRO_1000005822" description="Probable GTP-binding protein EngB">
    <location>
        <begin position="1"/>
        <end position="197"/>
    </location>
</feature>
<feature type="domain" description="EngB-type G" evidence="1">
    <location>
        <begin position="22"/>
        <end position="195"/>
    </location>
</feature>
<feature type="binding site" evidence="1">
    <location>
        <begin position="30"/>
        <end position="37"/>
    </location>
    <ligand>
        <name>GTP</name>
        <dbReference type="ChEBI" id="CHEBI:37565"/>
    </ligand>
</feature>
<feature type="binding site" evidence="1">
    <location>
        <position position="37"/>
    </location>
    <ligand>
        <name>Mg(2+)</name>
        <dbReference type="ChEBI" id="CHEBI:18420"/>
    </ligand>
</feature>
<feature type="binding site" evidence="1">
    <location>
        <begin position="57"/>
        <end position="61"/>
    </location>
    <ligand>
        <name>GTP</name>
        <dbReference type="ChEBI" id="CHEBI:37565"/>
    </ligand>
</feature>
<feature type="binding site" evidence="1">
    <location>
        <position position="59"/>
    </location>
    <ligand>
        <name>Mg(2+)</name>
        <dbReference type="ChEBI" id="CHEBI:18420"/>
    </ligand>
</feature>
<feature type="binding site" evidence="1">
    <location>
        <begin position="75"/>
        <end position="78"/>
    </location>
    <ligand>
        <name>GTP</name>
        <dbReference type="ChEBI" id="CHEBI:37565"/>
    </ligand>
</feature>
<feature type="binding site" evidence="1">
    <location>
        <begin position="142"/>
        <end position="145"/>
    </location>
    <ligand>
        <name>GTP</name>
        <dbReference type="ChEBI" id="CHEBI:37565"/>
    </ligand>
</feature>
<feature type="binding site" evidence="1">
    <location>
        <begin position="174"/>
        <end position="176"/>
    </location>
    <ligand>
        <name>GTP</name>
        <dbReference type="ChEBI" id="CHEBI:37565"/>
    </ligand>
</feature>